<evidence type="ECO:0000255" key="1">
    <source>
        <dbReference type="HAMAP-Rule" id="MF_01971"/>
    </source>
</evidence>
<evidence type="ECO:0000305" key="2"/>
<keyword id="KW-0274">FAD</keyword>
<keyword id="KW-0285">Flavoprotein</keyword>
<keyword id="KW-0503">Monooxygenase</keyword>
<keyword id="KW-0521">NADP</keyword>
<keyword id="KW-0560">Oxidoreductase</keyword>
<keyword id="KW-0662">Pyridine nucleotide biosynthesis</keyword>
<accession>B2SIT6</accession>
<reference key="1">
    <citation type="journal article" date="2008" name="BMC Genomics">
        <title>Genome sequence and rapid evolution of the rice pathogen Xanthomonas oryzae pv. oryzae PXO99A.</title>
        <authorList>
            <person name="Salzberg S.L."/>
            <person name="Sommer D.D."/>
            <person name="Schatz M.C."/>
            <person name="Phillippy A.M."/>
            <person name="Rabinowicz P.D."/>
            <person name="Tsuge S."/>
            <person name="Furutani A."/>
            <person name="Ochiai H."/>
            <person name="Delcher A.L."/>
            <person name="Kelley D."/>
            <person name="Madupu R."/>
            <person name="Puiu D."/>
            <person name="Radune D."/>
            <person name="Shumway M."/>
            <person name="Trapnell C."/>
            <person name="Aparna G."/>
            <person name="Jha G."/>
            <person name="Pandey A."/>
            <person name="Patil P.B."/>
            <person name="Ishihara H."/>
            <person name="Meyer D.F."/>
            <person name="Szurek B."/>
            <person name="Verdier V."/>
            <person name="Koebnik R."/>
            <person name="Dow J.M."/>
            <person name="Ryan R.P."/>
            <person name="Hirata H."/>
            <person name="Tsuyumu S."/>
            <person name="Won Lee S."/>
            <person name="Seo Y.-S."/>
            <person name="Sriariyanum M."/>
            <person name="Ronald P.C."/>
            <person name="Sonti R.V."/>
            <person name="Van Sluys M.-A."/>
            <person name="Leach J.E."/>
            <person name="White F.F."/>
            <person name="Bogdanove A.J."/>
        </authorList>
    </citation>
    <scope>NUCLEOTIDE SEQUENCE [LARGE SCALE GENOMIC DNA]</scope>
    <source>
        <strain>PXO99A</strain>
    </source>
</reference>
<sequence length="455" mass="51014">MNPVSPRSLTMIGAGLAGCLLAILLSRRGWQITVYERRGDPRIKGYECGRSINLALAERGRHALRQAGAEEVVMAKAVMMRGRMVHPLVGEPQLQRYGRDDSEVIWSIHRAALNVALLDLAEQAGARVHFYRRLHTVDFDAGYARFIDDRDDQPHEIHFQSLIGSDGAGSALRAAMQRKSPLGERTEFLDHSYKELEIPPLPGGGFRIEGNALHIWPRGRYMFIALPNDGGTFTVTLFLPNAGEPSFATTRNGDEAFALFARDFPDALPLIPQLKQHWEEHPPGLLGTLTLDRWHLDGRALLIGDAAHAMVPFHGQGMNCAFEDCVALADQLDAHDDLASAFAAFEAARRDDAGAIQQMALENYLEMRDRVDDPEFLLQRQLEQQLQARWPTRFVPHYTMVTFLRTRYSIALARSEIQREILVEATRGHSDLSRLDWAALETIVHARLEPLDGAH</sequence>
<gene>
    <name evidence="1" type="primary">kmo</name>
    <name type="ordered locus">PXO_00760</name>
</gene>
<name>KMO_XANOP</name>
<proteinExistence type="inferred from homology"/>
<comment type="function">
    <text evidence="1">Catalyzes the hydroxylation of L-kynurenine (L-Kyn) to form 3-hydroxy-L-kynurenine (L-3OHKyn). Required for synthesis of quinolinic acid.</text>
</comment>
<comment type="catalytic activity">
    <reaction evidence="1">
        <text>L-kynurenine + NADPH + O2 + H(+) = 3-hydroxy-L-kynurenine + NADP(+) + H2O</text>
        <dbReference type="Rhea" id="RHEA:20545"/>
        <dbReference type="ChEBI" id="CHEBI:15377"/>
        <dbReference type="ChEBI" id="CHEBI:15378"/>
        <dbReference type="ChEBI" id="CHEBI:15379"/>
        <dbReference type="ChEBI" id="CHEBI:57783"/>
        <dbReference type="ChEBI" id="CHEBI:57959"/>
        <dbReference type="ChEBI" id="CHEBI:58125"/>
        <dbReference type="ChEBI" id="CHEBI:58349"/>
        <dbReference type="EC" id="1.14.13.9"/>
    </reaction>
</comment>
<comment type="cofactor">
    <cofactor evidence="1">
        <name>FAD</name>
        <dbReference type="ChEBI" id="CHEBI:57692"/>
    </cofactor>
</comment>
<comment type="pathway">
    <text evidence="1">Cofactor biosynthesis; NAD(+) biosynthesis; quinolinate from L-kynurenine: step 1/3.</text>
</comment>
<comment type="similarity">
    <text evidence="1">Belongs to the aromatic-ring hydroxylase family. KMO subfamily.</text>
</comment>
<comment type="sequence caution" evidence="2">
    <conflict type="erroneous initiation">
        <sequence resource="EMBL-CDS" id="ACD58731"/>
    </conflict>
</comment>
<dbReference type="EC" id="1.14.13.9" evidence="1"/>
<dbReference type="EMBL" id="CP000967">
    <property type="protein sequence ID" value="ACD58731.1"/>
    <property type="status" value="ALT_INIT"/>
    <property type="molecule type" value="Genomic_DNA"/>
</dbReference>
<dbReference type="SMR" id="B2SIT6"/>
<dbReference type="KEGG" id="xop:PXO_00760"/>
<dbReference type="eggNOG" id="COG0654">
    <property type="taxonomic scope" value="Bacteria"/>
</dbReference>
<dbReference type="HOGENOM" id="CLU_023210_0_1_6"/>
<dbReference type="UniPathway" id="UPA00253">
    <property type="reaction ID" value="UER00328"/>
</dbReference>
<dbReference type="Proteomes" id="UP000001740">
    <property type="component" value="Chromosome"/>
</dbReference>
<dbReference type="GO" id="GO:0071949">
    <property type="term" value="F:FAD binding"/>
    <property type="evidence" value="ECO:0007669"/>
    <property type="project" value="InterPro"/>
</dbReference>
<dbReference type="GO" id="GO:0004502">
    <property type="term" value="F:kynurenine 3-monooxygenase activity"/>
    <property type="evidence" value="ECO:0007669"/>
    <property type="project" value="UniProtKB-UniRule"/>
</dbReference>
<dbReference type="GO" id="GO:0043420">
    <property type="term" value="P:anthranilate metabolic process"/>
    <property type="evidence" value="ECO:0007669"/>
    <property type="project" value="UniProtKB-UniRule"/>
</dbReference>
<dbReference type="GO" id="GO:0070189">
    <property type="term" value="P:kynurenine metabolic process"/>
    <property type="evidence" value="ECO:0007669"/>
    <property type="project" value="TreeGrafter"/>
</dbReference>
<dbReference type="GO" id="GO:0006569">
    <property type="term" value="P:L-tryptophan catabolic process"/>
    <property type="evidence" value="ECO:0007669"/>
    <property type="project" value="UniProtKB-UniRule"/>
</dbReference>
<dbReference type="GO" id="GO:0009435">
    <property type="term" value="P:NAD biosynthetic process"/>
    <property type="evidence" value="ECO:0007669"/>
    <property type="project" value="UniProtKB-UniPathway"/>
</dbReference>
<dbReference type="GO" id="GO:0019805">
    <property type="term" value="P:quinolinate biosynthetic process"/>
    <property type="evidence" value="ECO:0007669"/>
    <property type="project" value="UniProtKB-UniRule"/>
</dbReference>
<dbReference type="FunFam" id="3.50.50.60:FF:000185">
    <property type="entry name" value="Kynurenine 3-monooxygenase"/>
    <property type="match status" value="1"/>
</dbReference>
<dbReference type="Gene3D" id="3.50.50.60">
    <property type="entry name" value="FAD/NAD(P)-binding domain"/>
    <property type="match status" value="1"/>
</dbReference>
<dbReference type="HAMAP" id="MF_01971">
    <property type="entry name" value="Kynurenine_monooxygenase"/>
    <property type="match status" value="1"/>
</dbReference>
<dbReference type="InterPro" id="IPR002938">
    <property type="entry name" value="FAD-bd"/>
</dbReference>
<dbReference type="InterPro" id="IPR036188">
    <property type="entry name" value="FAD/NAD-bd_sf"/>
</dbReference>
<dbReference type="InterPro" id="IPR027545">
    <property type="entry name" value="Kynurenine_monooxygenase"/>
</dbReference>
<dbReference type="PANTHER" id="PTHR46028">
    <property type="entry name" value="KYNURENINE 3-MONOOXYGENASE"/>
    <property type="match status" value="1"/>
</dbReference>
<dbReference type="PANTHER" id="PTHR46028:SF2">
    <property type="entry name" value="KYNURENINE 3-MONOOXYGENASE"/>
    <property type="match status" value="1"/>
</dbReference>
<dbReference type="Pfam" id="PF01494">
    <property type="entry name" value="FAD_binding_3"/>
    <property type="match status" value="1"/>
</dbReference>
<dbReference type="PRINTS" id="PR00420">
    <property type="entry name" value="RNGMNOXGNASE"/>
</dbReference>
<dbReference type="SUPFAM" id="SSF51905">
    <property type="entry name" value="FAD/NAD(P)-binding domain"/>
    <property type="match status" value="1"/>
</dbReference>
<feature type="chain" id="PRO_0000361952" description="Kynurenine 3-monooxygenase">
    <location>
        <begin position="1"/>
        <end position="455"/>
    </location>
</feature>
<organism>
    <name type="scientific">Xanthomonas oryzae pv. oryzae (strain PXO99A)</name>
    <dbReference type="NCBI Taxonomy" id="360094"/>
    <lineage>
        <taxon>Bacteria</taxon>
        <taxon>Pseudomonadati</taxon>
        <taxon>Pseudomonadota</taxon>
        <taxon>Gammaproteobacteria</taxon>
        <taxon>Lysobacterales</taxon>
        <taxon>Lysobacteraceae</taxon>
        <taxon>Xanthomonas</taxon>
    </lineage>
</organism>
<protein>
    <recommendedName>
        <fullName evidence="1">Kynurenine 3-monooxygenase</fullName>
        <ecNumber evidence="1">1.14.13.9</ecNumber>
    </recommendedName>
    <alternativeName>
        <fullName evidence="1">Kynurenine 3-hydroxylase</fullName>
    </alternativeName>
</protein>